<organism>
    <name type="scientific">Bacillus anthracis (strain CDC 684 / NRRL 3495)</name>
    <dbReference type="NCBI Taxonomy" id="568206"/>
    <lineage>
        <taxon>Bacteria</taxon>
        <taxon>Bacillati</taxon>
        <taxon>Bacillota</taxon>
        <taxon>Bacilli</taxon>
        <taxon>Bacillales</taxon>
        <taxon>Bacillaceae</taxon>
        <taxon>Bacillus</taxon>
        <taxon>Bacillus cereus group</taxon>
    </lineage>
</organism>
<name>THII_BACAC</name>
<proteinExistence type="inferred from homology"/>
<comment type="function">
    <text evidence="1">Catalyzes the ATP-dependent transfer of a sulfur to tRNA to produce 4-thiouridine in position 8 of tRNAs, which functions as a near-UV photosensor. Also catalyzes the transfer of sulfur to the sulfur carrier protein ThiS, forming ThiS-thiocarboxylate. This is a step in the synthesis of thiazole, in the thiamine biosynthesis pathway. The sulfur is donated as persulfide by IscS.</text>
</comment>
<comment type="catalytic activity">
    <reaction evidence="1">
        <text>[ThiI sulfur-carrier protein]-S-sulfanyl-L-cysteine + a uridine in tRNA + 2 reduced [2Fe-2S]-[ferredoxin] + ATP + H(+) = [ThiI sulfur-carrier protein]-L-cysteine + a 4-thiouridine in tRNA + 2 oxidized [2Fe-2S]-[ferredoxin] + AMP + diphosphate</text>
        <dbReference type="Rhea" id="RHEA:24176"/>
        <dbReference type="Rhea" id="RHEA-COMP:10000"/>
        <dbReference type="Rhea" id="RHEA-COMP:10001"/>
        <dbReference type="Rhea" id="RHEA-COMP:13337"/>
        <dbReference type="Rhea" id="RHEA-COMP:13338"/>
        <dbReference type="Rhea" id="RHEA-COMP:13339"/>
        <dbReference type="Rhea" id="RHEA-COMP:13340"/>
        <dbReference type="ChEBI" id="CHEBI:15378"/>
        <dbReference type="ChEBI" id="CHEBI:29950"/>
        <dbReference type="ChEBI" id="CHEBI:30616"/>
        <dbReference type="ChEBI" id="CHEBI:33019"/>
        <dbReference type="ChEBI" id="CHEBI:33737"/>
        <dbReference type="ChEBI" id="CHEBI:33738"/>
        <dbReference type="ChEBI" id="CHEBI:61963"/>
        <dbReference type="ChEBI" id="CHEBI:65315"/>
        <dbReference type="ChEBI" id="CHEBI:136798"/>
        <dbReference type="ChEBI" id="CHEBI:456215"/>
        <dbReference type="EC" id="2.8.1.4"/>
    </reaction>
</comment>
<comment type="catalytic activity">
    <reaction evidence="1">
        <text>[ThiS sulfur-carrier protein]-C-terminal Gly-Gly-AMP + S-sulfanyl-L-cysteinyl-[cysteine desulfurase] + AH2 = [ThiS sulfur-carrier protein]-C-terminal-Gly-aminoethanethioate + L-cysteinyl-[cysteine desulfurase] + A + AMP + 2 H(+)</text>
        <dbReference type="Rhea" id="RHEA:43340"/>
        <dbReference type="Rhea" id="RHEA-COMP:12157"/>
        <dbReference type="Rhea" id="RHEA-COMP:12158"/>
        <dbReference type="Rhea" id="RHEA-COMP:12910"/>
        <dbReference type="Rhea" id="RHEA-COMP:19908"/>
        <dbReference type="ChEBI" id="CHEBI:13193"/>
        <dbReference type="ChEBI" id="CHEBI:15378"/>
        <dbReference type="ChEBI" id="CHEBI:17499"/>
        <dbReference type="ChEBI" id="CHEBI:29950"/>
        <dbReference type="ChEBI" id="CHEBI:61963"/>
        <dbReference type="ChEBI" id="CHEBI:90618"/>
        <dbReference type="ChEBI" id="CHEBI:232372"/>
        <dbReference type="ChEBI" id="CHEBI:456215"/>
    </reaction>
</comment>
<comment type="pathway">
    <text evidence="1">Cofactor biosynthesis; thiamine diphosphate biosynthesis.</text>
</comment>
<comment type="subcellular location">
    <subcellularLocation>
        <location evidence="1">Cytoplasm</location>
    </subcellularLocation>
</comment>
<comment type="similarity">
    <text evidence="1">Belongs to the ThiI family.</text>
</comment>
<gene>
    <name evidence="1" type="primary">thiI</name>
    <name type="ordered locus">BAMEG_4930</name>
</gene>
<evidence type="ECO:0000255" key="1">
    <source>
        <dbReference type="HAMAP-Rule" id="MF_00021"/>
    </source>
</evidence>
<protein>
    <recommendedName>
        <fullName evidence="1">Probable tRNA sulfurtransferase</fullName>
        <ecNumber evidence="1">2.8.1.4</ecNumber>
    </recommendedName>
    <alternativeName>
        <fullName evidence="1">Sulfur carrier protein ThiS sulfurtransferase</fullName>
    </alternativeName>
    <alternativeName>
        <fullName evidence="1">Thiamine biosynthesis protein ThiI</fullName>
    </alternativeName>
    <alternativeName>
        <fullName evidence="1">tRNA 4-thiouridine synthase</fullName>
    </alternativeName>
</protein>
<dbReference type="EC" id="2.8.1.4" evidence="1"/>
<dbReference type="EMBL" id="CP001215">
    <property type="protein sequence ID" value="ACP16802.1"/>
    <property type="molecule type" value="Genomic_DNA"/>
</dbReference>
<dbReference type="RefSeq" id="WP_000989283.1">
    <property type="nucleotide sequence ID" value="NC_012581.1"/>
</dbReference>
<dbReference type="SMR" id="C3L9V4"/>
<dbReference type="GeneID" id="45024520"/>
<dbReference type="KEGG" id="bah:BAMEG_4930"/>
<dbReference type="HOGENOM" id="CLU_037952_4_0_9"/>
<dbReference type="UniPathway" id="UPA00060"/>
<dbReference type="GO" id="GO:0005829">
    <property type="term" value="C:cytosol"/>
    <property type="evidence" value="ECO:0007669"/>
    <property type="project" value="TreeGrafter"/>
</dbReference>
<dbReference type="GO" id="GO:0005524">
    <property type="term" value="F:ATP binding"/>
    <property type="evidence" value="ECO:0007669"/>
    <property type="project" value="UniProtKB-UniRule"/>
</dbReference>
<dbReference type="GO" id="GO:0004810">
    <property type="term" value="F:CCA tRNA nucleotidyltransferase activity"/>
    <property type="evidence" value="ECO:0007669"/>
    <property type="project" value="InterPro"/>
</dbReference>
<dbReference type="GO" id="GO:0000049">
    <property type="term" value="F:tRNA binding"/>
    <property type="evidence" value="ECO:0007669"/>
    <property type="project" value="UniProtKB-UniRule"/>
</dbReference>
<dbReference type="GO" id="GO:0140741">
    <property type="term" value="F:tRNA-uracil-4 sulfurtransferase activity"/>
    <property type="evidence" value="ECO:0007669"/>
    <property type="project" value="UniProtKB-EC"/>
</dbReference>
<dbReference type="GO" id="GO:0009228">
    <property type="term" value="P:thiamine biosynthetic process"/>
    <property type="evidence" value="ECO:0007669"/>
    <property type="project" value="UniProtKB-KW"/>
</dbReference>
<dbReference type="GO" id="GO:0009229">
    <property type="term" value="P:thiamine diphosphate biosynthetic process"/>
    <property type="evidence" value="ECO:0007669"/>
    <property type="project" value="UniProtKB-UniRule"/>
</dbReference>
<dbReference type="GO" id="GO:0052837">
    <property type="term" value="P:thiazole biosynthetic process"/>
    <property type="evidence" value="ECO:0007669"/>
    <property type="project" value="TreeGrafter"/>
</dbReference>
<dbReference type="GO" id="GO:0002937">
    <property type="term" value="P:tRNA 4-thiouridine biosynthesis"/>
    <property type="evidence" value="ECO:0007669"/>
    <property type="project" value="TreeGrafter"/>
</dbReference>
<dbReference type="CDD" id="cd01712">
    <property type="entry name" value="PPase_ThiI"/>
    <property type="match status" value="1"/>
</dbReference>
<dbReference type="CDD" id="cd11716">
    <property type="entry name" value="THUMP_ThiI"/>
    <property type="match status" value="1"/>
</dbReference>
<dbReference type="FunFam" id="3.30.2130.30:FF:000003">
    <property type="entry name" value="Probable tRNA sulfurtransferase"/>
    <property type="match status" value="1"/>
</dbReference>
<dbReference type="FunFam" id="3.40.50.620:FF:000053">
    <property type="entry name" value="Probable tRNA sulfurtransferase"/>
    <property type="match status" value="1"/>
</dbReference>
<dbReference type="Gene3D" id="3.30.2130.30">
    <property type="match status" value="1"/>
</dbReference>
<dbReference type="Gene3D" id="3.40.50.620">
    <property type="entry name" value="HUPs"/>
    <property type="match status" value="1"/>
</dbReference>
<dbReference type="HAMAP" id="MF_00021">
    <property type="entry name" value="ThiI"/>
    <property type="match status" value="1"/>
</dbReference>
<dbReference type="InterPro" id="IPR014729">
    <property type="entry name" value="Rossmann-like_a/b/a_fold"/>
</dbReference>
<dbReference type="InterPro" id="IPR020536">
    <property type="entry name" value="ThiI_AANH"/>
</dbReference>
<dbReference type="InterPro" id="IPR054173">
    <property type="entry name" value="ThiI_fer"/>
</dbReference>
<dbReference type="InterPro" id="IPR049961">
    <property type="entry name" value="ThiI_N"/>
</dbReference>
<dbReference type="InterPro" id="IPR004114">
    <property type="entry name" value="THUMP_dom"/>
</dbReference>
<dbReference type="InterPro" id="IPR049962">
    <property type="entry name" value="THUMP_ThiI"/>
</dbReference>
<dbReference type="InterPro" id="IPR003720">
    <property type="entry name" value="tRNA_STrfase"/>
</dbReference>
<dbReference type="InterPro" id="IPR050102">
    <property type="entry name" value="tRNA_sulfurtransferase_ThiI"/>
</dbReference>
<dbReference type="NCBIfam" id="TIGR00342">
    <property type="entry name" value="tRNA uracil 4-sulfurtransferase ThiI"/>
    <property type="match status" value="1"/>
</dbReference>
<dbReference type="PANTHER" id="PTHR43209">
    <property type="entry name" value="TRNA SULFURTRANSFERASE"/>
    <property type="match status" value="1"/>
</dbReference>
<dbReference type="PANTHER" id="PTHR43209:SF1">
    <property type="entry name" value="TRNA SULFURTRANSFERASE"/>
    <property type="match status" value="1"/>
</dbReference>
<dbReference type="Pfam" id="PF02568">
    <property type="entry name" value="ThiI"/>
    <property type="match status" value="1"/>
</dbReference>
<dbReference type="Pfam" id="PF22025">
    <property type="entry name" value="ThiI_fer"/>
    <property type="match status" value="1"/>
</dbReference>
<dbReference type="Pfam" id="PF02926">
    <property type="entry name" value="THUMP"/>
    <property type="match status" value="1"/>
</dbReference>
<dbReference type="SMART" id="SM00981">
    <property type="entry name" value="THUMP"/>
    <property type="match status" value="1"/>
</dbReference>
<dbReference type="SUPFAM" id="SSF52402">
    <property type="entry name" value="Adenine nucleotide alpha hydrolases-like"/>
    <property type="match status" value="1"/>
</dbReference>
<dbReference type="SUPFAM" id="SSF143437">
    <property type="entry name" value="THUMP domain-like"/>
    <property type="match status" value="1"/>
</dbReference>
<dbReference type="PROSITE" id="PS51165">
    <property type="entry name" value="THUMP"/>
    <property type="match status" value="1"/>
</dbReference>
<sequence length="404" mass="45842">MMTYEYILVRYGEMTTKGKNRSKFVSTLKDNVKFKLKKFPNIKIDATHDRMYIQLNGEDHEAVSERLKDVFGIHKFNLAMKVPSELEDIKKGALAAFLQVKGDVKTFKITVHRSYKHFPMRTMELLPEIGGHILENTEDITVDVHNPDVNVRVEIRSGYSYIMCDERMGAGGLPVGVGGKVMVLLSGGIDSPVAAYLTMKRGVSVEAVHFHSPPFTSERAKQKVIDLAQELTKYCKRVTLHLVPFTEVQKTINKEIPSSYSMTVMRRMMMRITERIAEERNALAITTGESLGQVASQTLDSMHTINEVTNYPVIRPLITMDKLEIIKIAEEIGTYDISIRPYEDCCTVFTPASPATKPKREKANRFEAKYDFTPLIDEAVANKETMVLQTVEVVAEEEKFEELF</sequence>
<keyword id="KW-0067">ATP-binding</keyword>
<keyword id="KW-0963">Cytoplasm</keyword>
<keyword id="KW-0547">Nucleotide-binding</keyword>
<keyword id="KW-0694">RNA-binding</keyword>
<keyword id="KW-0784">Thiamine biosynthesis</keyword>
<keyword id="KW-0808">Transferase</keyword>
<keyword id="KW-0820">tRNA-binding</keyword>
<feature type="chain" id="PRO_1000196919" description="Probable tRNA sulfurtransferase">
    <location>
        <begin position="1"/>
        <end position="404"/>
    </location>
</feature>
<feature type="domain" description="THUMP" evidence="1">
    <location>
        <begin position="61"/>
        <end position="166"/>
    </location>
</feature>
<feature type="binding site" evidence="1">
    <location>
        <begin position="184"/>
        <end position="185"/>
    </location>
    <ligand>
        <name>ATP</name>
        <dbReference type="ChEBI" id="CHEBI:30616"/>
    </ligand>
</feature>
<feature type="binding site" evidence="1">
    <location>
        <begin position="209"/>
        <end position="210"/>
    </location>
    <ligand>
        <name>ATP</name>
        <dbReference type="ChEBI" id="CHEBI:30616"/>
    </ligand>
</feature>
<feature type="binding site" evidence="1">
    <location>
        <position position="266"/>
    </location>
    <ligand>
        <name>ATP</name>
        <dbReference type="ChEBI" id="CHEBI:30616"/>
    </ligand>
</feature>
<feature type="binding site" evidence="1">
    <location>
        <position position="288"/>
    </location>
    <ligand>
        <name>ATP</name>
        <dbReference type="ChEBI" id="CHEBI:30616"/>
    </ligand>
</feature>
<feature type="binding site" evidence="1">
    <location>
        <position position="297"/>
    </location>
    <ligand>
        <name>ATP</name>
        <dbReference type="ChEBI" id="CHEBI:30616"/>
    </ligand>
</feature>
<reference key="1">
    <citation type="submission" date="2008-10" db="EMBL/GenBank/DDBJ databases">
        <title>Genome sequence of Bacillus anthracis str. CDC 684.</title>
        <authorList>
            <person name="Dodson R.J."/>
            <person name="Munk A.C."/>
            <person name="Brettin T."/>
            <person name="Bruce D."/>
            <person name="Detter C."/>
            <person name="Tapia R."/>
            <person name="Han C."/>
            <person name="Sutton G."/>
            <person name="Sims D."/>
        </authorList>
    </citation>
    <scope>NUCLEOTIDE SEQUENCE [LARGE SCALE GENOMIC DNA]</scope>
    <source>
        <strain>CDC 684 / NRRL 3495</strain>
    </source>
</reference>
<accession>C3L9V4</accession>